<accession>P0DXE2</accession>
<organism>
    <name type="scientific">Sinomonas cyclohexanicum</name>
    <name type="common">Corynebacterium cyclohexanicum</name>
    <dbReference type="NCBI Taxonomy" id="322009"/>
    <lineage>
        <taxon>Bacteria</taxon>
        <taxon>Bacillati</taxon>
        <taxon>Actinomycetota</taxon>
        <taxon>Actinomycetes</taxon>
        <taxon>Micrococcales</taxon>
        <taxon>Micrococcaceae</taxon>
        <taxon>Sinomonas</taxon>
    </lineage>
</organism>
<protein>
    <recommendedName>
        <fullName evidence="5">4-oxocyclohexanecarboxylate 2-dehydrogenase</fullName>
        <ecNumber evidence="1 2">1.17.3.5</ecNumber>
    </recommendedName>
    <alternativeName>
        <fullName evidence="4">4-oxocyclohexanecarboxylate 2-desaturase</fullName>
        <shortName evidence="3">4-oxoCHCA desaturase</shortName>
    </alternativeName>
    <alternativeName>
        <fullName evidence="4">Desaturase I</fullName>
    </alternativeName>
</protein>
<dbReference type="EC" id="1.17.3.5" evidence="1 2"/>
<dbReference type="EMBL" id="AP024525">
    <property type="protein sequence ID" value="BCT75152.1"/>
    <property type="molecule type" value="Genomic_DNA"/>
</dbReference>
<dbReference type="RefSeq" id="WP_229231922.1">
    <property type="nucleotide sequence ID" value="NZ_AP024525.1"/>
</dbReference>
<dbReference type="SMR" id="P0DXE2"/>
<dbReference type="KEGG" id="ccyc:SCMU_09940"/>
<dbReference type="GO" id="GO:0033765">
    <property type="term" value="F:steroid dehydrogenase activity, acting on the CH-CH group of donors"/>
    <property type="evidence" value="ECO:0007669"/>
    <property type="project" value="UniProtKB-ARBA"/>
</dbReference>
<dbReference type="GO" id="GO:0008202">
    <property type="term" value="P:steroid metabolic process"/>
    <property type="evidence" value="ECO:0007669"/>
    <property type="project" value="UniProtKB-ARBA"/>
</dbReference>
<dbReference type="Gene3D" id="3.50.50.60">
    <property type="entry name" value="FAD/NAD(P)-binding domain"/>
    <property type="match status" value="2"/>
</dbReference>
<dbReference type="Gene3D" id="3.90.700.10">
    <property type="entry name" value="Succinate dehydrogenase/fumarate reductase flavoprotein, catalytic domain"/>
    <property type="match status" value="1"/>
</dbReference>
<dbReference type="InterPro" id="IPR003953">
    <property type="entry name" value="FAD-dep_OxRdtase_2_FAD-bd"/>
</dbReference>
<dbReference type="InterPro" id="IPR050315">
    <property type="entry name" value="FAD-oxidoreductase_2"/>
</dbReference>
<dbReference type="InterPro" id="IPR036188">
    <property type="entry name" value="FAD/NAD-bd_sf"/>
</dbReference>
<dbReference type="InterPro" id="IPR027477">
    <property type="entry name" value="Succ_DH/fumarate_Rdtase_cat_sf"/>
</dbReference>
<dbReference type="PANTHER" id="PTHR43400:SF10">
    <property type="entry name" value="3-OXOSTEROID 1-DEHYDROGENASE"/>
    <property type="match status" value="1"/>
</dbReference>
<dbReference type="PANTHER" id="PTHR43400">
    <property type="entry name" value="FUMARATE REDUCTASE"/>
    <property type="match status" value="1"/>
</dbReference>
<dbReference type="Pfam" id="PF00890">
    <property type="entry name" value="FAD_binding_2"/>
    <property type="match status" value="1"/>
</dbReference>
<dbReference type="SUPFAM" id="SSF51905">
    <property type="entry name" value="FAD/NAD(P)-binding domain"/>
    <property type="match status" value="1"/>
</dbReference>
<dbReference type="SUPFAM" id="SSF56425">
    <property type="entry name" value="Succinate dehydrogenase/fumarate reductase flavoprotein, catalytic domain"/>
    <property type="match status" value="1"/>
</dbReference>
<name>CHCC1_SINCY</name>
<gene>
    <name evidence="3" type="primary">chcC1</name>
    <name evidence="7" type="ORF">SCMU_09940</name>
</gene>
<comment type="function">
    <text evidence="1 2">Desaturase involved in a cyclohexanecarboxylate (CHCA) degradation pathway (PubMed:34583900, PubMed:8281951). Catalyzes the conversion of 4-oxocyclohexanecarboxylate (4-oxoCHCA) to 4-oxocyclohexenecarboxylate (PubMed:34583900, PubMed:8281951). Is highly specific for 4-oxocyclohexanecarboxylic acid and shows only slight activity with 4-oxo-2-methylcyclohex-2-enecarboxylic acid (PubMed:8281951).</text>
</comment>
<comment type="catalytic activity">
    <reaction evidence="1 2">
        <text>4-oxocyclohexane-1-carboxylate + O2 = 4-oxocyclohex-2-ene-1-carboxylate + H2O2</text>
        <dbReference type="Rhea" id="RHEA:79151"/>
        <dbReference type="ChEBI" id="CHEBI:15379"/>
        <dbReference type="ChEBI" id="CHEBI:15777"/>
        <dbReference type="ChEBI" id="CHEBI:16240"/>
        <dbReference type="ChEBI" id="CHEBI:229702"/>
        <dbReference type="EC" id="1.17.3.5"/>
    </reaction>
    <physiologicalReaction direction="left-to-right" evidence="1 2">
        <dbReference type="Rhea" id="RHEA:79152"/>
    </physiologicalReaction>
</comment>
<comment type="cofactor">
    <cofactor evidence="1 6">
        <name>FAD</name>
        <dbReference type="ChEBI" id="CHEBI:57692"/>
    </cofactor>
</comment>
<comment type="activity regulation">
    <text evidence="2">Inhibited by 5,5'-dithio-bis(2- nitrobenzoate) and N-bromosuccinimide, but not by thiol and chelating reagents.</text>
</comment>
<comment type="biophysicochemical properties">
    <kinetics>
        <KM evidence="1">0.39 mM for 4-oxoCHCA</KM>
        <KM evidence="2">0.23 mM for 4-oxoCHCA (at pH 7.6)</KM>
        <Vmax evidence="1">41.0 umol/min/mg enzyme</Vmax>
        <Vmax evidence="2">0.71 umol/min/mg enzyme (at pH 7.6)</Vmax>
        <text evidence="1">kcat is 44 sec(-1).</text>
    </kinetics>
    <phDependence>
        <text evidence="1 2">Optimum pH is 7.2 (PubMed:34583900). Optimum pH is 7.6 (PubMed:8281951).</text>
    </phDependence>
</comment>
<comment type="subunit">
    <text evidence="1 2">Monomer (PubMed:8281951). Homodimer (PubMed:34583900).</text>
</comment>
<comment type="induction">
    <text evidence="1">Induced by CHCA, trans-4-hydroxyCHCA and 4-oxoCHCA but not by 4-hydroxybenzoate (4-HBA).</text>
</comment>
<comment type="similarity">
    <text evidence="5">Belongs to the FAD-dependent oxidoreductase 2 family.</text>
</comment>
<sequence>MEYLVGTPRSTYDVVVLGSGAGALTAAATAARAGKSVVVLEKASLLGGTSAISGGMLWIAANHHAREAGFEDTADAALEYVRAVSRGRAREELLAAAVTRGDSMLRFLEHELGVTFIYLDNFPDYRQDLPGAVDGGRTIEPELANIADLLGDLADRVRSDGRAPFTMQEYEDWGAFTRFPWDELDARAKAGLVAKGRALVAMLLAAAIREGAHVAVEARGERLIYSGQGADDGGRVTGVVLASGERIDATEAVVIATGGFEWDHSLADSMLASRLYTMCSPPTNEGDGLRMAQRIGAQTRGTREAWWAPMSITGDTRDGRPIGTLLRFERQGPGSIMVNRHGKRFANESQNYNDLARCLQSWDSPANTTLNTPAHVVFDQSYLERYGVLSHRAGEPTPDYLIEGATLPELAAKIGVPAENLVATVERFNAFAVTGEDPDFHRGQTAYDKYWGDADNVWPNPSLGPLEQGPFYALEVVNGAFGTNGGIATDGAARVLDVDGAPIAGLFAVGNATESAYAAGYPGAGATLGPLMTMGYLAGRTIAGQAAGYDDGAAAASAAELTDLAEPVLAEAAR</sequence>
<reference key="1">
    <citation type="journal article" date="2021" name="J. Biosci. Bioeng.">
        <title>Identification and characterization of a chc gene cluster responsible for the aromatization pathway of cyclohexanecarboxylate degradation in Sinomonas cyclohexanicum ATCC 51369.</title>
        <authorList>
            <person name="Yamamoto T."/>
            <person name="Hasegawa Y."/>
            <person name="Lau P.C.K."/>
            <person name="Iwaki H."/>
        </authorList>
    </citation>
    <scope>NUCLEOTIDE SEQUENCE [LARGE SCALE GENOMIC DNA]</scope>
    <scope>FUNCTION</scope>
    <scope>CATALYTIC ACTIVITY</scope>
    <scope>COFACTOR</scope>
    <scope>BIOPHYSICOCHEMICAL PROPERTIES</scope>
    <scope>SUBUNIT</scope>
    <scope>INDUCTION</scope>
    <scope>MUTAGENESIS OF CYS-279</scope>
    <source>
        <strain>ATCC 51369 / MU</strain>
    </source>
</reference>
<reference key="2">
    <citation type="journal article" date="1993" name="Eur. J. Biochem.">
        <title>Aromatization of 4-oxocyclohexanecarboxylic acid to 4-hydroxybenzoic acid by two distinctive desaturases from Corynebacterium cyclohexanicum. Properties of two desaturases.</title>
        <authorList>
            <person name="Kaneda T."/>
            <person name="Obata H."/>
            <person name="Tokumoto M."/>
        </authorList>
    </citation>
    <scope>FUNCTION</scope>
    <scope>CATALYTIC ACTIVITY</scope>
    <scope>ACTIVITY REGULATION</scope>
    <scope>BIOPHYSICOCHEMICAL PROPERTIES</scope>
    <scope>SUBUNIT</scope>
    <source>
        <strain>ATCC 51369 / MU</strain>
    </source>
</reference>
<feature type="chain" id="PRO_0000460810" description="4-oxocyclohexanecarboxylate 2-dehydrogenase">
    <location>
        <begin position="1"/>
        <end position="574"/>
    </location>
</feature>
<feature type="mutagenesis site" description="Still binds FAD but FAD is easily released by heat treatment or 50% ethanol." evidence="1">
    <original>C</original>
    <variation>A</variation>
    <variation>M</variation>
    <location>
        <position position="279"/>
    </location>
</feature>
<proteinExistence type="evidence at protein level"/>
<evidence type="ECO:0000269" key="1">
    <source>
    </source>
</evidence>
<evidence type="ECO:0000269" key="2">
    <source>
    </source>
</evidence>
<evidence type="ECO:0000303" key="3">
    <source>
    </source>
</evidence>
<evidence type="ECO:0000303" key="4">
    <source>
    </source>
</evidence>
<evidence type="ECO:0000305" key="5"/>
<evidence type="ECO:0000305" key="6">
    <source>
    </source>
</evidence>
<evidence type="ECO:0000312" key="7">
    <source>
        <dbReference type="EMBL" id="BCT75152.1"/>
    </source>
</evidence>
<keyword id="KW-0274">FAD</keyword>
<keyword id="KW-0285">Flavoprotein</keyword>
<keyword id="KW-0560">Oxidoreductase</keyword>